<gene>
    <name type="primary">kz</name>
    <name type="ORF">CG3228</name>
</gene>
<proteinExistence type="evidence at protein level"/>
<sequence length="1192" mass="134121">MGKKVHNAKARQNPQTIVDNSAVKKIQIDVDAVAGGNQVGYDEANALVLPSEKRATKIKVDKVQHVKILSKKQRKHLQAIVDKKKKKEGRAQLLGDLAAVQIPEEELQQYTSISQVQTVGLKRLPTLDEYLAKKKERQAQVLAEKSSASGLRVNAIKGSKRKLLVEEEEELQAKRKNPNVISVEEDDEDSSSSDEDDEEAPAQSAPIAIPTPVSIAPPQIAVKPPIKKLKPEPNPPACIHQTVYVPVHRTTEVQNARLRLPILAEEQQVMETINENPIVIVAGETGSGKTTQLPQFLYEAGYAQHKMIGVTEPRRVAAIAMSKRVAHEMNLPESEVSYLIRFEGNVTPATRIKFMTDGVLLKEIETDFLLSKYSVIILDEAHERSVYTDILVGLLSRIVPLRHKRGQPLKLIIMSATLRVSDFTENTRLFKIPPPLLKVEARQFPVTIHFQKRTPDDYVAEAYRKTLKIHNKLPEGGILIFVTGQQEVNQLVRKLRRTFPYHHAPTKDVAKNGKVSEEEKEETIDDAASTVEDPKELEFDMKRVIRNIRKSKKKFLAQMALPKINLDDYKLPGDDTEADMHEQPDEDDEQEGLEEDNDDELGLEDESGMGSGQRQPLWVLPLYSLLSSEKQNRIFLPVPDGCRLCVVSTNVAETSLTIPHIKYVVDCGRQKTRLYDKLTGVSAFVVTYTSKASADQRAGRAGRISAGHCYRLYSSAVYNDCFEDFSQPDIQKKPVEDLMLQMRCMGIDRVVHFPFPSPPDQVQLQAAERRLIVLGALEVAKTENTDLPPAVTRLGHVISRFPVAPRFGKMLALSHQQNLLPYTVCLVAALSVQEVLIETGVQRDEDVAPGANRFHRKRQSWAASGNYQLLGDPMVLLRAVGAAEYAGSQGRLPEFCAANGLRQKAMSEVRKLRVQLTNEINLNVSDVELGVDPELKPPTDAQARFLRQILLAGMGDRVARKVPLADIADKEERRRLKYAYNCADMEEPAFLHVSSVLRQKAPEWVIYQEAYELQNGDSTKMFIRGITAIEPEWLLLYVPLLCNIREVREDPAPRFDKTSGKIFCHVDATFGKSGWELPLGEVEMPLSEKACCYFGMFLLDGEVCSRLADFRSKLKSTPASVIKSWSSMNNKVLRFKRALITKQIHNRQALIDQWNSDPHFLLEEYQNLLYDVALSELTPLWPPVDKKEPQRQ</sequence>
<evidence type="ECO:0000255" key="1">
    <source>
        <dbReference type="PROSITE-ProRule" id="PRU00541"/>
    </source>
</evidence>
<evidence type="ECO:0000255" key="2">
    <source>
        <dbReference type="PROSITE-ProRule" id="PRU00542"/>
    </source>
</evidence>
<evidence type="ECO:0000256" key="3">
    <source>
        <dbReference type="SAM" id="MobiDB-lite"/>
    </source>
</evidence>
<evidence type="ECO:0000269" key="4">
    <source>
    </source>
</evidence>
<evidence type="ECO:0000269" key="5">
    <source>
    </source>
</evidence>
<evidence type="ECO:0000305" key="6"/>
<accession>O46072</accession>
<protein>
    <recommendedName>
        <fullName>Probable ATP-dependent RNA helicase kurz</fullName>
        <ecNumber>3.6.4.13</ecNumber>
    </recommendedName>
</protein>
<reference key="1">
    <citation type="journal article" date="1992" name="Nucleic Acids Res.">
        <title>The kurz locus of Drosophila melanogaster shares conserved motifs with a family of yeast ATP dependent splicing factors.</title>
        <authorList>
            <person name="Tirronen M."/>
            <person name="Roos C."/>
        </authorList>
    </citation>
    <scope>PRELIMINARY NUCLEOTIDE SEQUENCE</scope>
    <source>
        <strain>Oregon-R</strain>
    </source>
</reference>
<reference key="2">
    <citation type="submission" date="1998-07" db="EMBL/GenBank/DDBJ databases">
        <authorList>
            <person name="Roos C."/>
        </authorList>
    </citation>
    <scope>SEQUENCE REVISION</scope>
</reference>
<reference key="3">
    <citation type="journal article" date="2000" name="Science">
        <title>The genome sequence of Drosophila melanogaster.</title>
        <authorList>
            <person name="Adams M.D."/>
            <person name="Celniker S.E."/>
            <person name="Holt R.A."/>
            <person name="Evans C.A."/>
            <person name="Gocayne J.D."/>
            <person name="Amanatides P.G."/>
            <person name="Scherer S.E."/>
            <person name="Li P.W."/>
            <person name="Hoskins R.A."/>
            <person name="Galle R.F."/>
            <person name="George R.A."/>
            <person name="Lewis S.E."/>
            <person name="Richards S."/>
            <person name="Ashburner M."/>
            <person name="Henderson S.N."/>
            <person name="Sutton G.G."/>
            <person name="Wortman J.R."/>
            <person name="Yandell M.D."/>
            <person name="Zhang Q."/>
            <person name="Chen L.X."/>
            <person name="Brandon R.C."/>
            <person name="Rogers Y.-H.C."/>
            <person name="Blazej R.G."/>
            <person name="Champe M."/>
            <person name="Pfeiffer B.D."/>
            <person name="Wan K.H."/>
            <person name="Doyle C."/>
            <person name="Baxter E.G."/>
            <person name="Helt G."/>
            <person name="Nelson C.R."/>
            <person name="Miklos G.L.G."/>
            <person name="Abril J.F."/>
            <person name="Agbayani A."/>
            <person name="An H.-J."/>
            <person name="Andrews-Pfannkoch C."/>
            <person name="Baldwin D."/>
            <person name="Ballew R.M."/>
            <person name="Basu A."/>
            <person name="Baxendale J."/>
            <person name="Bayraktaroglu L."/>
            <person name="Beasley E.M."/>
            <person name="Beeson K.Y."/>
            <person name="Benos P.V."/>
            <person name="Berman B.P."/>
            <person name="Bhandari D."/>
            <person name="Bolshakov S."/>
            <person name="Borkova D."/>
            <person name="Botchan M.R."/>
            <person name="Bouck J."/>
            <person name="Brokstein P."/>
            <person name="Brottier P."/>
            <person name="Burtis K.C."/>
            <person name="Busam D.A."/>
            <person name="Butler H."/>
            <person name="Cadieu E."/>
            <person name="Center A."/>
            <person name="Chandra I."/>
            <person name="Cherry J.M."/>
            <person name="Cawley S."/>
            <person name="Dahlke C."/>
            <person name="Davenport L.B."/>
            <person name="Davies P."/>
            <person name="de Pablos B."/>
            <person name="Delcher A."/>
            <person name="Deng Z."/>
            <person name="Mays A.D."/>
            <person name="Dew I."/>
            <person name="Dietz S.M."/>
            <person name="Dodson K."/>
            <person name="Doup L.E."/>
            <person name="Downes M."/>
            <person name="Dugan-Rocha S."/>
            <person name="Dunkov B.C."/>
            <person name="Dunn P."/>
            <person name="Durbin K.J."/>
            <person name="Evangelista C.C."/>
            <person name="Ferraz C."/>
            <person name="Ferriera S."/>
            <person name="Fleischmann W."/>
            <person name="Fosler C."/>
            <person name="Gabrielian A.E."/>
            <person name="Garg N.S."/>
            <person name="Gelbart W.M."/>
            <person name="Glasser K."/>
            <person name="Glodek A."/>
            <person name="Gong F."/>
            <person name="Gorrell J.H."/>
            <person name="Gu Z."/>
            <person name="Guan P."/>
            <person name="Harris M."/>
            <person name="Harris N.L."/>
            <person name="Harvey D.A."/>
            <person name="Heiman T.J."/>
            <person name="Hernandez J.R."/>
            <person name="Houck J."/>
            <person name="Hostin D."/>
            <person name="Houston K.A."/>
            <person name="Howland T.J."/>
            <person name="Wei M.-H."/>
            <person name="Ibegwam C."/>
            <person name="Jalali M."/>
            <person name="Kalush F."/>
            <person name="Karpen G.H."/>
            <person name="Ke Z."/>
            <person name="Kennison J.A."/>
            <person name="Ketchum K.A."/>
            <person name="Kimmel B.E."/>
            <person name="Kodira C.D."/>
            <person name="Kraft C.L."/>
            <person name="Kravitz S."/>
            <person name="Kulp D."/>
            <person name="Lai Z."/>
            <person name="Lasko P."/>
            <person name="Lei Y."/>
            <person name="Levitsky A.A."/>
            <person name="Li J.H."/>
            <person name="Li Z."/>
            <person name="Liang Y."/>
            <person name="Lin X."/>
            <person name="Liu X."/>
            <person name="Mattei B."/>
            <person name="McIntosh T.C."/>
            <person name="McLeod M.P."/>
            <person name="McPherson D."/>
            <person name="Merkulov G."/>
            <person name="Milshina N.V."/>
            <person name="Mobarry C."/>
            <person name="Morris J."/>
            <person name="Moshrefi A."/>
            <person name="Mount S.M."/>
            <person name="Moy M."/>
            <person name="Murphy B."/>
            <person name="Murphy L."/>
            <person name="Muzny D.M."/>
            <person name="Nelson D.L."/>
            <person name="Nelson D.R."/>
            <person name="Nelson K.A."/>
            <person name="Nixon K."/>
            <person name="Nusskern D.R."/>
            <person name="Pacleb J.M."/>
            <person name="Palazzolo M."/>
            <person name="Pittman G.S."/>
            <person name="Pan S."/>
            <person name="Pollard J."/>
            <person name="Puri V."/>
            <person name="Reese M.G."/>
            <person name="Reinert K."/>
            <person name="Remington K."/>
            <person name="Saunders R.D.C."/>
            <person name="Scheeler F."/>
            <person name="Shen H."/>
            <person name="Shue B.C."/>
            <person name="Siden-Kiamos I."/>
            <person name="Simpson M."/>
            <person name="Skupski M.P."/>
            <person name="Smith T.J."/>
            <person name="Spier E."/>
            <person name="Spradling A.C."/>
            <person name="Stapleton M."/>
            <person name="Strong R."/>
            <person name="Sun E."/>
            <person name="Svirskas R."/>
            <person name="Tector C."/>
            <person name="Turner R."/>
            <person name="Venter E."/>
            <person name="Wang A.H."/>
            <person name="Wang X."/>
            <person name="Wang Z.-Y."/>
            <person name="Wassarman D.A."/>
            <person name="Weinstock G.M."/>
            <person name="Weissenbach J."/>
            <person name="Williams S.M."/>
            <person name="Woodage T."/>
            <person name="Worley K.C."/>
            <person name="Wu D."/>
            <person name="Yang S."/>
            <person name="Yao Q.A."/>
            <person name="Ye J."/>
            <person name="Yeh R.-F."/>
            <person name="Zaveri J.S."/>
            <person name="Zhan M."/>
            <person name="Zhang G."/>
            <person name="Zhao Q."/>
            <person name="Zheng L."/>
            <person name="Zheng X.H."/>
            <person name="Zhong F.N."/>
            <person name="Zhong W."/>
            <person name="Zhou X."/>
            <person name="Zhu S.C."/>
            <person name="Zhu X."/>
            <person name="Smith H.O."/>
            <person name="Gibbs R.A."/>
            <person name="Myers E.W."/>
            <person name="Rubin G.M."/>
            <person name="Venter J.C."/>
        </authorList>
    </citation>
    <scope>NUCLEOTIDE SEQUENCE [LARGE SCALE GENOMIC DNA]</scope>
    <source>
        <strain>Berkeley</strain>
    </source>
</reference>
<reference key="4">
    <citation type="journal article" date="2002" name="Genome Biol.">
        <title>Annotation of the Drosophila melanogaster euchromatic genome: a systematic review.</title>
        <authorList>
            <person name="Misra S."/>
            <person name="Crosby M.A."/>
            <person name="Mungall C.J."/>
            <person name="Matthews B.B."/>
            <person name="Campbell K.S."/>
            <person name="Hradecky P."/>
            <person name="Huang Y."/>
            <person name="Kaminker J.S."/>
            <person name="Millburn G.H."/>
            <person name="Prochnik S.E."/>
            <person name="Smith C.D."/>
            <person name="Tupy J.L."/>
            <person name="Whitfield E.J."/>
            <person name="Bayraktaroglu L."/>
            <person name="Berman B.P."/>
            <person name="Bettencourt B.R."/>
            <person name="Celniker S.E."/>
            <person name="de Grey A.D.N.J."/>
            <person name="Drysdale R.A."/>
            <person name="Harris N.L."/>
            <person name="Richter J."/>
            <person name="Russo S."/>
            <person name="Schroeder A.J."/>
            <person name="Shu S.Q."/>
            <person name="Stapleton M."/>
            <person name="Yamada C."/>
            <person name="Ashburner M."/>
            <person name="Gelbart W.M."/>
            <person name="Rubin G.M."/>
            <person name="Lewis S.E."/>
        </authorList>
    </citation>
    <scope>GENOME REANNOTATION</scope>
    <source>
        <strain>Berkeley</strain>
    </source>
</reference>
<reference key="5">
    <citation type="journal article" date="2000" name="Science">
        <title>From sequence to chromosome: the tip of the X chromosome of D. melanogaster.</title>
        <authorList>
            <person name="Benos P.V."/>
            <person name="Gatt M.K."/>
            <person name="Ashburner M."/>
            <person name="Murphy L."/>
            <person name="Harris D."/>
            <person name="Barrell B.G."/>
            <person name="Ferraz C."/>
            <person name="Vidal S."/>
            <person name="Brun C."/>
            <person name="Demailles J."/>
            <person name="Cadieu E."/>
            <person name="Dreano S."/>
            <person name="Gloux S."/>
            <person name="Lelaure V."/>
            <person name="Mottier S."/>
            <person name="Galibert F."/>
            <person name="Borkova D."/>
            <person name="Minana B."/>
            <person name="Kafatos F.C."/>
            <person name="Louis C."/>
            <person name="Siden-Kiamos I."/>
            <person name="Bolshakov S."/>
            <person name="Papagiannakis G."/>
            <person name="Spanos L."/>
            <person name="Cox S."/>
            <person name="Madueno E."/>
            <person name="de Pablos B."/>
            <person name="Modolell J."/>
            <person name="Peter A."/>
            <person name="Schoettler P."/>
            <person name="Werner M."/>
            <person name="Mourkioti F."/>
            <person name="Beinert N."/>
            <person name="Dowe G."/>
            <person name="Schaefer U."/>
            <person name="Jaeckle H."/>
            <person name="Bucheton A."/>
            <person name="Callister D.M."/>
            <person name="Campbell L.A."/>
            <person name="Darlamitsou A."/>
            <person name="Henderson N.S."/>
            <person name="McMillan P.J."/>
            <person name="Salles C."/>
            <person name="Tait E.A."/>
            <person name="Valenti P."/>
            <person name="Saunders R.D.C."/>
            <person name="Glover D.M."/>
        </authorList>
    </citation>
    <scope>NUCLEOTIDE SEQUENCE [LARGE SCALE GENOMIC DNA]</scope>
    <source>
        <strain>Oregon-R</strain>
    </source>
</reference>
<reference key="6">
    <citation type="journal article" date="1987" name="EMBO J.">
        <title>Oocyte-specific transcription of fs(1)K10: a Drosophila gene affecting dorsal-ventral developmental polarity.</title>
        <authorList>
            <person name="Haenlin M."/>
            <person name="Roos C."/>
            <person name="Cassab A."/>
            <person name="Mohier E."/>
        </authorList>
    </citation>
    <scope>DEVELOPMENTAL STAGE</scope>
</reference>
<reference key="7">
    <citation type="journal article" date="2008" name="J. Proteome Res.">
        <title>Phosphoproteome analysis of Drosophila melanogaster embryos.</title>
        <authorList>
            <person name="Zhai B."/>
            <person name="Villen J."/>
            <person name="Beausoleil S.A."/>
            <person name="Mintseris J."/>
            <person name="Gygi S.P."/>
        </authorList>
    </citation>
    <scope>PHOSPHORYLATION [LARGE SCALE ANALYSIS] AT SER-529 AND THR-530</scope>
    <scope>IDENTIFICATION BY MASS SPECTROMETRY</scope>
    <source>
        <tissue>Embryo</tissue>
    </source>
</reference>
<feature type="chain" id="PRO_0000055006" description="Probable ATP-dependent RNA helicase kurz">
    <location>
        <begin position="1"/>
        <end position="1192"/>
    </location>
</feature>
<feature type="domain" description="Helicase ATP-binding" evidence="1">
    <location>
        <begin position="270"/>
        <end position="436"/>
    </location>
</feature>
<feature type="domain" description="Helicase C-terminal" evidence="2">
    <location>
        <begin position="540"/>
        <end position="746"/>
    </location>
</feature>
<feature type="region of interest" description="Disordered" evidence="3">
    <location>
        <begin position="170"/>
        <end position="214"/>
    </location>
</feature>
<feature type="region of interest" description="Disordered" evidence="3">
    <location>
        <begin position="504"/>
        <end position="529"/>
    </location>
</feature>
<feature type="region of interest" description="Disordered" evidence="3">
    <location>
        <begin position="567"/>
        <end position="612"/>
    </location>
</feature>
<feature type="short sequence motif" description="DEAH box">
    <location>
        <begin position="379"/>
        <end position="382"/>
    </location>
</feature>
<feature type="compositionally biased region" description="Acidic residues" evidence="3">
    <location>
        <begin position="183"/>
        <end position="200"/>
    </location>
</feature>
<feature type="compositionally biased region" description="Basic and acidic residues" evidence="3">
    <location>
        <begin position="505"/>
        <end position="517"/>
    </location>
</feature>
<feature type="compositionally biased region" description="Basic and acidic residues" evidence="3">
    <location>
        <begin position="567"/>
        <end position="583"/>
    </location>
</feature>
<feature type="compositionally biased region" description="Acidic residues" evidence="3">
    <location>
        <begin position="584"/>
        <end position="607"/>
    </location>
</feature>
<feature type="binding site" evidence="1">
    <location>
        <begin position="283"/>
        <end position="290"/>
    </location>
    <ligand>
        <name>ATP</name>
        <dbReference type="ChEBI" id="CHEBI:30616"/>
    </ligand>
</feature>
<feature type="modified residue" description="Phosphoserine" evidence="5">
    <location>
        <position position="529"/>
    </location>
</feature>
<feature type="modified residue" description="Phosphothreonine" evidence="5">
    <location>
        <position position="530"/>
    </location>
</feature>
<comment type="catalytic activity">
    <reaction>
        <text>ATP + H2O = ADP + phosphate + H(+)</text>
        <dbReference type="Rhea" id="RHEA:13065"/>
        <dbReference type="ChEBI" id="CHEBI:15377"/>
        <dbReference type="ChEBI" id="CHEBI:15378"/>
        <dbReference type="ChEBI" id="CHEBI:30616"/>
        <dbReference type="ChEBI" id="CHEBI:43474"/>
        <dbReference type="ChEBI" id="CHEBI:456216"/>
        <dbReference type="EC" id="3.6.4.13"/>
    </reaction>
</comment>
<comment type="developmental stage">
    <text evidence="4">Maternal protein detectable up to 6 hours of embryonic development.</text>
</comment>
<comment type="miscellaneous">
    <text>'Kurz' means 'short' in German.</text>
</comment>
<comment type="similarity">
    <text evidence="6">Belongs to the DEAD box helicase family. DEAH subfamily.</text>
</comment>
<organism>
    <name type="scientific">Drosophila melanogaster</name>
    <name type="common">Fruit fly</name>
    <dbReference type="NCBI Taxonomy" id="7227"/>
    <lineage>
        <taxon>Eukaryota</taxon>
        <taxon>Metazoa</taxon>
        <taxon>Ecdysozoa</taxon>
        <taxon>Arthropoda</taxon>
        <taxon>Hexapoda</taxon>
        <taxon>Insecta</taxon>
        <taxon>Pterygota</taxon>
        <taxon>Neoptera</taxon>
        <taxon>Endopterygota</taxon>
        <taxon>Diptera</taxon>
        <taxon>Brachycera</taxon>
        <taxon>Muscomorpha</taxon>
        <taxon>Ephydroidea</taxon>
        <taxon>Drosophilidae</taxon>
        <taxon>Drosophila</taxon>
        <taxon>Sophophora</taxon>
    </lineage>
</organism>
<keyword id="KW-0067">ATP-binding</keyword>
<keyword id="KW-0347">Helicase</keyword>
<keyword id="KW-0378">Hydrolase</keyword>
<keyword id="KW-0547">Nucleotide-binding</keyword>
<keyword id="KW-0597">Phosphoprotein</keyword>
<keyword id="KW-1185">Reference proteome</keyword>
<keyword id="KW-0694">RNA-binding</keyword>
<dbReference type="EC" id="3.6.4.13"/>
<dbReference type="EMBL" id="X64418">
    <property type="protein sequence ID" value="CAB55570.1"/>
    <property type="molecule type" value="Genomic_DNA"/>
</dbReference>
<dbReference type="EMBL" id="AE014298">
    <property type="protein sequence ID" value="AAF45757.1"/>
    <property type="molecule type" value="Genomic_DNA"/>
</dbReference>
<dbReference type="EMBL" id="AL009195">
    <property type="protein sequence ID" value="CAA15706.1"/>
    <property type="molecule type" value="Genomic_DNA"/>
</dbReference>
<dbReference type="PIR" id="T13424">
    <property type="entry name" value="T13424"/>
</dbReference>
<dbReference type="RefSeq" id="NP_001284815.1">
    <property type="nucleotide sequence ID" value="NM_001297886.1"/>
</dbReference>
<dbReference type="RefSeq" id="NP_476591.1">
    <property type="nucleotide sequence ID" value="NM_057243.4"/>
</dbReference>
<dbReference type="SMR" id="O46072"/>
<dbReference type="BioGRID" id="57743">
    <property type="interactions" value="2"/>
</dbReference>
<dbReference type="FunCoup" id="O46072">
    <property type="interactions" value="2511"/>
</dbReference>
<dbReference type="IntAct" id="O46072">
    <property type="interactions" value="5"/>
</dbReference>
<dbReference type="STRING" id="7227.FBpp0070403"/>
<dbReference type="iPTMnet" id="O46072"/>
<dbReference type="PaxDb" id="7227-FBpp0070403"/>
<dbReference type="EnsemblMetazoa" id="FBtr0070419">
    <property type="protein sequence ID" value="FBpp0070403"/>
    <property type="gene ID" value="FBgn0001330"/>
</dbReference>
<dbReference type="EnsemblMetazoa" id="FBtr0342769">
    <property type="protein sequence ID" value="FBpp0309621"/>
    <property type="gene ID" value="FBgn0001330"/>
</dbReference>
<dbReference type="GeneID" id="31205"/>
<dbReference type="KEGG" id="dme:Dmel_CG3228"/>
<dbReference type="UCSC" id="CG3228-RA">
    <property type="organism name" value="d. melanogaster"/>
</dbReference>
<dbReference type="AGR" id="FB:FBgn0001330"/>
<dbReference type="CTD" id="31205"/>
<dbReference type="FlyBase" id="FBgn0001330">
    <property type="gene designation" value="kz"/>
</dbReference>
<dbReference type="VEuPathDB" id="VectorBase:FBgn0001330"/>
<dbReference type="eggNOG" id="KOG0926">
    <property type="taxonomic scope" value="Eukaryota"/>
</dbReference>
<dbReference type="HOGENOM" id="CLU_001832_0_0_1"/>
<dbReference type="InParanoid" id="O46072"/>
<dbReference type="OMA" id="KYAYHCA"/>
<dbReference type="OrthoDB" id="10025033at2759"/>
<dbReference type="PhylomeDB" id="O46072"/>
<dbReference type="Reactome" id="R-DME-6791226">
    <property type="pathway name" value="Major pathway of rRNA processing in the nucleolus and cytosol"/>
</dbReference>
<dbReference type="SignaLink" id="O46072"/>
<dbReference type="BioGRID-ORCS" id="31205">
    <property type="hits" value="0 hits in 1 CRISPR screen"/>
</dbReference>
<dbReference type="ChiTaRS" id="sls">
    <property type="organism name" value="fly"/>
</dbReference>
<dbReference type="GenomeRNAi" id="31205"/>
<dbReference type="PRO" id="PR:O46072"/>
<dbReference type="Proteomes" id="UP000000803">
    <property type="component" value="Chromosome X"/>
</dbReference>
<dbReference type="Bgee" id="FBgn0001330">
    <property type="expression patterns" value="Expressed in posterior terminal follicle cell in ovary and 47 other cell types or tissues"/>
</dbReference>
<dbReference type="ExpressionAtlas" id="O46072">
    <property type="expression patterns" value="baseline and differential"/>
</dbReference>
<dbReference type="GO" id="GO:0005730">
    <property type="term" value="C:nucleolus"/>
    <property type="evidence" value="ECO:0000318"/>
    <property type="project" value="GO_Central"/>
</dbReference>
<dbReference type="GO" id="GO:0005524">
    <property type="term" value="F:ATP binding"/>
    <property type="evidence" value="ECO:0007669"/>
    <property type="project" value="UniProtKB-KW"/>
</dbReference>
<dbReference type="GO" id="GO:0016887">
    <property type="term" value="F:ATP hydrolysis activity"/>
    <property type="evidence" value="ECO:0007669"/>
    <property type="project" value="RHEA"/>
</dbReference>
<dbReference type="GO" id="GO:0004386">
    <property type="term" value="F:helicase activity"/>
    <property type="evidence" value="ECO:0000250"/>
    <property type="project" value="FlyBase"/>
</dbReference>
<dbReference type="GO" id="GO:0003723">
    <property type="term" value="F:RNA binding"/>
    <property type="evidence" value="ECO:0000318"/>
    <property type="project" value="GO_Central"/>
</dbReference>
<dbReference type="GO" id="GO:0003724">
    <property type="term" value="F:RNA helicase activity"/>
    <property type="evidence" value="ECO:0000250"/>
    <property type="project" value="FlyBase"/>
</dbReference>
<dbReference type="GO" id="GO:0000462">
    <property type="term" value="P:maturation of SSU-rRNA from tricistronic rRNA transcript (SSU-rRNA, 5.8S rRNA, LSU-rRNA)"/>
    <property type="evidence" value="ECO:0000318"/>
    <property type="project" value="GO_Central"/>
</dbReference>
<dbReference type="CDD" id="cd17982">
    <property type="entry name" value="DEXHc_DHX37"/>
    <property type="match status" value="1"/>
</dbReference>
<dbReference type="CDD" id="cd18791">
    <property type="entry name" value="SF2_C_RHA"/>
    <property type="match status" value="1"/>
</dbReference>
<dbReference type="FunFam" id="3.40.50.300:FF:000637">
    <property type="entry name" value="ATP-dependent RNA helicase DHX37/DHR1"/>
    <property type="match status" value="1"/>
</dbReference>
<dbReference type="FunFam" id="3.40.50.300:FF:002883">
    <property type="entry name" value="Kurz, isoform B"/>
    <property type="match status" value="1"/>
</dbReference>
<dbReference type="FunFam" id="1.20.120.1080:FF:000042">
    <property type="entry name" value="probable ATP-dependent RNA helicase kurz"/>
    <property type="match status" value="1"/>
</dbReference>
<dbReference type="FunFam" id="3.40.50.300:FF:001555">
    <property type="entry name" value="Putative ATP-dependent RNA helicase"/>
    <property type="match status" value="1"/>
</dbReference>
<dbReference type="Gene3D" id="1.20.120.1080">
    <property type="match status" value="1"/>
</dbReference>
<dbReference type="Gene3D" id="3.40.50.300">
    <property type="entry name" value="P-loop containing nucleotide triphosphate hydrolases"/>
    <property type="match status" value="3"/>
</dbReference>
<dbReference type="InterPro" id="IPR011709">
    <property type="entry name" value="DEAD-box_helicase_OB_fold"/>
</dbReference>
<dbReference type="InterPro" id="IPR011545">
    <property type="entry name" value="DEAD/DEAH_box_helicase_dom"/>
</dbReference>
<dbReference type="InterPro" id="IPR056371">
    <property type="entry name" value="DHX37-like_C"/>
</dbReference>
<dbReference type="InterPro" id="IPR002464">
    <property type="entry name" value="DNA/RNA_helicase_DEAH_CS"/>
</dbReference>
<dbReference type="InterPro" id="IPR007502">
    <property type="entry name" value="Helicase-assoc_dom"/>
</dbReference>
<dbReference type="InterPro" id="IPR014001">
    <property type="entry name" value="Helicase_ATP-bd"/>
</dbReference>
<dbReference type="InterPro" id="IPR001650">
    <property type="entry name" value="Helicase_C-like"/>
</dbReference>
<dbReference type="InterPro" id="IPR027417">
    <property type="entry name" value="P-loop_NTPase"/>
</dbReference>
<dbReference type="PANTHER" id="PTHR18934">
    <property type="entry name" value="ATP-DEPENDENT RNA HELICASE"/>
    <property type="match status" value="1"/>
</dbReference>
<dbReference type="PANTHER" id="PTHR18934:SF99">
    <property type="entry name" value="ATP-DEPENDENT RNA HELICASE DHX37-RELATED"/>
    <property type="match status" value="1"/>
</dbReference>
<dbReference type="Pfam" id="PF00270">
    <property type="entry name" value="DEAD"/>
    <property type="match status" value="1"/>
</dbReference>
<dbReference type="Pfam" id="PF23362">
    <property type="entry name" value="DHX37_C"/>
    <property type="match status" value="1"/>
</dbReference>
<dbReference type="Pfam" id="PF21010">
    <property type="entry name" value="HA2_C"/>
    <property type="match status" value="1"/>
</dbReference>
<dbReference type="Pfam" id="PF00271">
    <property type="entry name" value="Helicase_C"/>
    <property type="match status" value="1"/>
</dbReference>
<dbReference type="Pfam" id="PF07717">
    <property type="entry name" value="OB_NTP_bind"/>
    <property type="match status" value="1"/>
</dbReference>
<dbReference type="SMART" id="SM00487">
    <property type="entry name" value="DEXDc"/>
    <property type="match status" value="1"/>
</dbReference>
<dbReference type="SMART" id="SM00847">
    <property type="entry name" value="HA2"/>
    <property type="match status" value="1"/>
</dbReference>
<dbReference type="SMART" id="SM00490">
    <property type="entry name" value="HELICc"/>
    <property type="match status" value="1"/>
</dbReference>
<dbReference type="SUPFAM" id="SSF52540">
    <property type="entry name" value="P-loop containing nucleoside triphosphate hydrolases"/>
    <property type="match status" value="1"/>
</dbReference>
<dbReference type="PROSITE" id="PS00690">
    <property type="entry name" value="DEAH_ATP_HELICASE"/>
    <property type="match status" value="1"/>
</dbReference>
<dbReference type="PROSITE" id="PS51192">
    <property type="entry name" value="HELICASE_ATP_BIND_1"/>
    <property type="match status" value="1"/>
</dbReference>
<dbReference type="PROSITE" id="PS51194">
    <property type="entry name" value="HELICASE_CTER"/>
    <property type="match status" value="1"/>
</dbReference>
<name>KZ_DROME</name>